<name>PGSA_AQUAE</name>
<accession>O67908</accession>
<keyword id="KW-1003">Cell membrane</keyword>
<keyword id="KW-0444">Lipid biosynthesis</keyword>
<keyword id="KW-0443">Lipid metabolism</keyword>
<keyword id="KW-0472">Membrane</keyword>
<keyword id="KW-0594">Phospholipid biosynthesis</keyword>
<keyword id="KW-1208">Phospholipid metabolism</keyword>
<keyword id="KW-1185">Reference proteome</keyword>
<keyword id="KW-0808">Transferase</keyword>
<keyword id="KW-0812">Transmembrane</keyword>
<keyword id="KW-1133">Transmembrane helix</keyword>
<protein>
    <recommendedName>
        <fullName>CDP-diacylglycerol--glycerol-3-phosphate 3-phosphatidyltransferase</fullName>
        <ecNumber>2.7.8.5</ecNumber>
    </recommendedName>
    <alternativeName>
        <fullName>Phosphatidylglycerophosphate synthase</fullName>
        <shortName>PGP synthase</shortName>
    </alternativeName>
</protein>
<feature type="chain" id="PRO_0000056771" description="CDP-diacylglycerol--glycerol-3-phosphate 3-phosphatidyltransferase">
    <location>
        <begin position="1"/>
        <end position="178"/>
    </location>
</feature>
<feature type="transmembrane region" description="Helical" evidence="2">
    <location>
        <begin position="28"/>
        <end position="48"/>
    </location>
</feature>
<feature type="transmembrane region" description="Helical" evidence="2">
    <location>
        <begin position="88"/>
        <end position="108"/>
    </location>
</feature>
<feature type="transmembrane region" description="Helical" evidence="2">
    <location>
        <begin position="125"/>
        <end position="145"/>
    </location>
</feature>
<feature type="transmembrane region" description="Helical" evidence="2">
    <location>
        <begin position="147"/>
        <end position="167"/>
    </location>
</feature>
<comment type="function">
    <text evidence="1">This protein catalyzes the committed step to the synthesis of the acidic phospholipids.</text>
</comment>
<comment type="catalytic activity">
    <reaction>
        <text>a CDP-1,2-diacyl-sn-glycerol + sn-glycerol 3-phosphate = a 1,2-diacyl-sn-glycero-3-phospho-(1'-sn-glycero-3'-phosphate) + CMP + H(+)</text>
        <dbReference type="Rhea" id="RHEA:12593"/>
        <dbReference type="ChEBI" id="CHEBI:15378"/>
        <dbReference type="ChEBI" id="CHEBI:57597"/>
        <dbReference type="ChEBI" id="CHEBI:58332"/>
        <dbReference type="ChEBI" id="CHEBI:60110"/>
        <dbReference type="ChEBI" id="CHEBI:60377"/>
        <dbReference type="EC" id="2.7.8.5"/>
    </reaction>
</comment>
<comment type="pathway">
    <text>Phospholipid metabolism; phosphatidylglycerol biosynthesis; phosphatidylglycerol from CDP-diacylglycerol: step 1/2.</text>
</comment>
<comment type="subcellular location">
    <subcellularLocation>
        <location evidence="1">Cell membrane</location>
        <topology evidence="1">Multi-pass membrane protein</topology>
    </subcellularLocation>
</comment>
<comment type="similarity">
    <text evidence="3">Belongs to the CDP-alcohol phosphatidyltransferase class-I family.</text>
</comment>
<evidence type="ECO:0000250" key="1"/>
<evidence type="ECO:0000255" key="2"/>
<evidence type="ECO:0000305" key="3"/>
<sequence>MNVPNLLSLSRLILSPLILYFVLEENYLSSLVLVLFLALMDFLDGFFARKLNQSTRMGKILDPLADKVFTFFSLLSYTFFSKERLNPLIFFLLLGRDITLIIGGIFLIKRKFTPEPSIYGKFTTLFVSLSLLSVGILNVYDVNFLRILTNVLEIVSLILILVSWVDYTLKGFKMIFKE</sequence>
<dbReference type="EC" id="2.7.8.5"/>
<dbReference type="EMBL" id="AE000657">
    <property type="protein sequence ID" value="AAC07866.1"/>
    <property type="molecule type" value="Genomic_DNA"/>
</dbReference>
<dbReference type="PIR" id="H70484">
    <property type="entry name" value="H70484"/>
</dbReference>
<dbReference type="RefSeq" id="NP_214477.1">
    <property type="nucleotide sequence ID" value="NC_000918.1"/>
</dbReference>
<dbReference type="RefSeq" id="WP_010881413.1">
    <property type="nucleotide sequence ID" value="NC_000918.1"/>
</dbReference>
<dbReference type="SMR" id="O67908"/>
<dbReference type="STRING" id="224324.aq_2154"/>
<dbReference type="EnsemblBacteria" id="AAC07866">
    <property type="protein sequence ID" value="AAC07866"/>
    <property type="gene ID" value="aq_2154"/>
</dbReference>
<dbReference type="KEGG" id="aae:aq_2154"/>
<dbReference type="PATRIC" id="fig|224324.8.peg.1665"/>
<dbReference type="eggNOG" id="COG0558">
    <property type="taxonomic scope" value="Bacteria"/>
</dbReference>
<dbReference type="HOGENOM" id="CLU_051314_2_2_0"/>
<dbReference type="InParanoid" id="O67908"/>
<dbReference type="OrthoDB" id="9796672at2"/>
<dbReference type="UniPathway" id="UPA00084">
    <property type="reaction ID" value="UER00503"/>
</dbReference>
<dbReference type="Proteomes" id="UP000000798">
    <property type="component" value="Chromosome"/>
</dbReference>
<dbReference type="GO" id="GO:0005886">
    <property type="term" value="C:plasma membrane"/>
    <property type="evidence" value="ECO:0007669"/>
    <property type="project" value="UniProtKB-SubCell"/>
</dbReference>
<dbReference type="GO" id="GO:0008444">
    <property type="term" value="F:CDP-diacylglycerol-glycerol-3-phosphate 3-phosphatidyltransferase activity"/>
    <property type="evidence" value="ECO:0007669"/>
    <property type="project" value="UniProtKB-EC"/>
</dbReference>
<dbReference type="GO" id="GO:0046474">
    <property type="term" value="P:glycerophospholipid biosynthetic process"/>
    <property type="evidence" value="ECO:0000318"/>
    <property type="project" value="GO_Central"/>
</dbReference>
<dbReference type="GO" id="GO:0006655">
    <property type="term" value="P:phosphatidylglycerol biosynthetic process"/>
    <property type="evidence" value="ECO:0007669"/>
    <property type="project" value="UniProtKB-UniPathway"/>
</dbReference>
<dbReference type="FunFam" id="1.20.120.1760:FF:000023">
    <property type="entry name" value="Putative CDP-diacylglycerol--glycerol-3-phosphate 3-phosphatidyltransferase"/>
    <property type="match status" value="1"/>
</dbReference>
<dbReference type="Gene3D" id="1.20.120.1760">
    <property type="match status" value="1"/>
</dbReference>
<dbReference type="InterPro" id="IPR050324">
    <property type="entry name" value="CDP-alcohol_PTase-I"/>
</dbReference>
<dbReference type="InterPro" id="IPR000462">
    <property type="entry name" value="CDP-OH_P_trans"/>
</dbReference>
<dbReference type="InterPro" id="IPR043130">
    <property type="entry name" value="CDP-OH_PTrfase_TM_dom"/>
</dbReference>
<dbReference type="InterPro" id="IPR048254">
    <property type="entry name" value="CDP_ALCOHOL_P_TRANSF_CS"/>
</dbReference>
<dbReference type="InterPro" id="IPR004570">
    <property type="entry name" value="Phosphatidylglycerol_P_synth"/>
</dbReference>
<dbReference type="PANTHER" id="PTHR14269:SF11">
    <property type="entry name" value="CDP-DIACYLGLYCEROL--GLYCEROL-3-PHOSPHATE 3-PHOSPHATIDYLTRANSFERASE"/>
    <property type="match status" value="1"/>
</dbReference>
<dbReference type="PANTHER" id="PTHR14269">
    <property type="entry name" value="CDP-DIACYLGLYCEROL--GLYCEROL-3-PHOSPHATE 3-PHOSPHATIDYLTRANSFERASE-RELATED"/>
    <property type="match status" value="1"/>
</dbReference>
<dbReference type="Pfam" id="PF01066">
    <property type="entry name" value="CDP-OH_P_transf"/>
    <property type="match status" value="1"/>
</dbReference>
<dbReference type="PIRSF" id="PIRSF000847">
    <property type="entry name" value="Phos_ph_gly_syn"/>
    <property type="match status" value="1"/>
</dbReference>
<dbReference type="PROSITE" id="PS00379">
    <property type="entry name" value="CDP_ALCOHOL_P_TRANSF"/>
    <property type="match status" value="1"/>
</dbReference>
<proteinExistence type="inferred from homology"/>
<organism>
    <name type="scientific">Aquifex aeolicus (strain VF5)</name>
    <dbReference type="NCBI Taxonomy" id="224324"/>
    <lineage>
        <taxon>Bacteria</taxon>
        <taxon>Pseudomonadati</taxon>
        <taxon>Aquificota</taxon>
        <taxon>Aquificia</taxon>
        <taxon>Aquificales</taxon>
        <taxon>Aquificaceae</taxon>
        <taxon>Aquifex</taxon>
    </lineage>
</organism>
<gene>
    <name type="primary">pgsA</name>
    <name type="ordered locus">aq_2154</name>
</gene>
<reference key="1">
    <citation type="journal article" date="1998" name="Nature">
        <title>The complete genome of the hyperthermophilic bacterium Aquifex aeolicus.</title>
        <authorList>
            <person name="Deckert G."/>
            <person name="Warren P.V."/>
            <person name="Gaasterland T."/>
            <person name="Young W.G."/>
            <person name="Lenox A.L."/>
            <person name="Graham D.E."/>
            <person name="Overbeek R."/>
            <person name="Snead M.A."/>
            <person name="Keller M."/>
            <person name="Aujay M."/>
            <person name="Huber R."/>
            <person name="Feldman R.A."/>
            <person name="Short J.M."/>
            <person name="Olsen G.J."/>
            <person name="Swanson R.V."/>
        </authorList>
    </citation>
    <scope>NUCLEOTIDE SEQUENCE [LARGE SCALE GENOMIC DNA]</scope>
    <source>
        <strain>VF5</strain>
    </source>
</reference>